<name>YAJQ_ECOHS</name>
<organism>
    <name type="scientific">Escherichia coli O9:H4 (strain HS)</name>
    <dbReference type="NCBI Taxonomy" id="331112"/>
    <lineage>
        <taxon>Bacteria</taxon>
        <taxon>Pseudomonadati</taxon>
        <taxon>Pseudomonadota</taxon>
        <taxon>Gammaproteobacteria</taxon>
        <taxon>Enterobacterales</taxon>
        <taxon>Enterobacteriaceae</taxon>
        <taxon>Escherichia</taxon>
    </lineage>
</organism>
<sequence>MPSFDIVSEVDLQEARNAVDNASREVESRFDFRNVEASFELNDASKTIKVLSESDFQVNQLLDILRAKLLKRGIEGSSLDVPENIVHSGKTWFVEAKLKQGIESATQKKIVKMIKDSKLKVQAQIQGDEIRVTGKSRDDLQAVMAMVRGGDLGQPFQFKNFRD</sequence>
<keyword id="KW-0547">Nucleotide-binding</keyword>
<evidence type="ECO:0000255" key="1">
    <source>
        <dbReference type="HAMAP-Rule" id="MF_00632"/>
    </source>
</evidence>
<reference key="1">
    <citation type="journal article" date="2008" name="J. Bacteriol.">
        <title>The pangenome structure of Escherichia coli: comparative genomic analysis of E. coli commensal and pathogenic isolates.</title>
        <authorList>
            <person name="Rasko D.A."/>
            <person name="Rosovitz M.J."/>
            <person name="Myers G.S.A."/>
            <person name="Mongodin E.F."/>
            <person name="Fricke W.F."/>
            <person name="Gajer P."/>
            <person name="Crabtree J."/>
            <person name="Sebaihia M."/>
            <person name="Thomson N.R."/>
            <person name="Chaudhuri R."/>
            <person name="Henderson I.R."/>
            <person name="Sperandio V."/>
            <person name="Ravel J."/>
        </authorList>
    </citation>
    <scope>NUCLEOTIDE SEQUENCE [LARGE SCALE GENOMIC DNA]</scope>
    <source>
        <strain>HS</strain>
    </source>
</reference>
<comment type="function">
    <text evidence="1">Nucleotide-binding protein.</text>
</comment>
<comment type="similarity">
    <text evidence="1">Belongs to the YajQ family.</text>
</comment>
<feature type="chain" id="PRO_1000061399" description="Nucleotide-binding protein YajQ">
    <location>
        <begin position="1"/>
        <end position="163"/>
    </location>
</feature>
<dbReference type="EMBL" id="CP000802">
    <property type="protein sequence ID" value="ABV04883.1"/>
    <property type="molecule type" value="Genomic_DNA"/>
</dbReference>
<dbReference type="RefSeq" id="WP_001138904.1">
    <property type="nucleotide sequence ID" value="NC_009800.1"/>
</dbReference>
<dbReference type="BMRB" id="A7ZX79"/>
<dbReference type="SMR" id="A7ZX79"/>
<dbReference type="GeneID" id="93777034"/>
<dbReference type="KEGG" id="ecx:EcHS_A0498"/>
<dbReference type="HOGENOM" id="CLU_099839_1_0_6"/>
<dbReference type="GO" id="GO:0005829">
    <property type="term" value="C:cytosol"/>
    <property type="evidence" value="ECO:0007669"/>
    <property type="project" value="TreeGrafter"/>
</dbReference>
<dbReference type="GO" id="GO:0000166">
    <property type="term" value="F:nucleotide binding"/>
    <property type="evidence" value="ECO:0007669"/>
    <property type="project" value="TreeGrafter"/>
</dbReference>
<dbReference type="CDD" id="cd11740">
    <property type="entry name" value="YajQ_like"/>
    <property type="match status" value="1"/>
</dbReference>
<dbReference type="FunFam" id="3.30.70.860:FF:000001">
    <property type="entry name" value="UPF0234 protein YajQ"/>
    <property type="match status" value="1"/>
</dbReference>
<dbReference type="FunFam" id="3.30.70.990:FF:000001">
    <property type="entry name" value="UPF0234 protein YajQ"/>
    <property type="match status" value="1"/>
</dbReference>
<dbReference type="Gene3D" id="3.30.70.860">
    <property type="match status" value="1"/>
</dbReference>
<dbReference type="Gene3D" id="3.30.70.990">
    <property type="entry name" value="YajQ-like, domain 2"/>
    <property type="match status" value="1"/>
</dbReference>
<dbReference type="HAMAP" id="MF_00632">
    <property type="entry name" value="YajQ"/>
    <property type="match status" value="1"/>
</dbReference>
<dbReference type="InterPro" id="IPR007551">
    <property type="entry name" value="DUF520"/>
</dbReference>
<dbReference type="InterPro" id="IPR035571">
    <property type="entry name" value="UPF0234-like_C"/>
</dbReference>
<dbReference type="InterPro" id="IPR035570">
    <property type="entry name" value="UPF0234_N"/>
</dbReference>
<dbReference type="InterPro" id="IPR036183">
    <property type="entry name" value="YajQ-like_sf"/>
</dbReference>
<dbReference type="NCBIfam" id="NF003819">
    <property type="entry name" value="PRK05412.1"/>
    <property type="match status" value="1"/>
</dbReference>
<dbReference type="PANTHER" id="PTHR30476">
    <property type="entry name" value="UPF0234 PROTEIN YAJQ"/>
    <property type="match status" value="1"/>
</dbReference>
<dbReference type="PANTHER" id="PTHR30476:SF0">
    <property type="entry name" value="UPF0234 PROTEIN YAJQ"/>
    <property type="match status" value="1"/>
</dbReference>
<dbReference type="Pfam" id="PF04461">
    <property type="entry name" value="DUF520"/>
    <property type="match status" value="1"/>
</dbReference>
<dbReference type="SUPFAM" id="SSF89963">
    <property type="entry name" value="YajQ-like"/>
    <property type="match status" value="2"/>
</dbReference>
<accession>A7ZX79</accession>
<protein>
    <recommendedName>
        <fullName evidence="1">Nucleotide-binding protein YajQ</fullName>
    </recommendedName>
</protein>
<gene>
    <name evidence="1" type="primary">yajQ</name>
    <name type="ordered locus">EcHS_A0498</name>
</gene>
<proteinExistence type="inferred from homology"/>